<dbReference type="EC" id="3.6.4.12" evidence="1 2"/>
<dbReference type="EMBL" id="CH476625">
    <property type="protein sequence ID" value="EDO01590.1"/>
    <property type="molecule type" value="Genomic_DNA"/>
</dbReference>
<dbReference type="RefSeq" id="XP_001594258.1">
    <property type="nucleotide sequence ID" value="XM_001594208.1"/>
</dbReference>
<dbReference type="SMR" id="A7EFH4"/>
<dbReference type="FunCoup" id="A7EFH4">
    <property type="interactions" value="191"/>
</dbReference>
<dbReference type="STRING" id="665079.A7EFH4"/>
<dbReference type="EnsemblFungi" id="EDO01590">
    <property type="protein sequence ID" value="EDO01590"/>
    <property type="gene ID" value="SS1G_04065"/>
</dbReference>
<dbReference type="GeneID" id="5491071"/>
<dbReference type="KEGG" id="ssl:SS1G_04065"/>
<dbReference type="VEuPathDB" id="FungiDB:sscle_02g019780"/>
<dbReference type="eggNOG" id="KOG0354">
    <property type="taxonomic scope" value="Eukaryota"/>
</dbReference>
<dbReference type="HOGENOM" id="CLU_002513_0_1_1"/>
<dbReference type="InParanoid" id="A7EFH4"/>
<dbReference type="OMA" id="KACFEIA"/>
<dbReference type="OrthoDB" id="164902at2759"/>
<dbReference type="Proteomes" id="UP000001312">
    <property type="component" value="Unassembled WGS sequence"/>
</dbReference>
<dbReference type="GO" id="GO:0005634">
    <property type="term" value="C:nucleus"/>
    <property type="evidence" value="ECO:0007669"/>
    <property type="project" value="UniProtKB-SubCell"/>
</dbReference>
<dbReference type="GO" id="GO:0043138">
    <property type="term" value="F:3'-5' DNA helicase activity"/>
    <property type="evidence" value="ECO:0000318"/>
    <property type="project" value="GO_Central"/>
</dbReference>
<dbReference type="GO" id="GO:0005524">
    <property type="term" value="F:ATP binding"/>
    <property type="evidence" value="ECO:0007669"/>
    <property type="project" value="UniProtKB-KW"/>
</dbReference>
<dbReference type="GO" id="GO:0016887">
    <property type="term" value="F:ATP hydrolysis activity"/>
    <property type="evidence" value="ECO:0007669"/>
    <property type="project" value="RHEA"/>
</dbReference>
<dbReference type="GO" id="GO:0000400">
    <property type="term" value="F:four-way junction DNA binding"/>
    <property type="evidence" value="ECO:0000318"/>
    <property type="project" value="GO_Central"/>
</dbReference>
<dbReference type="GO" id="GO:0009378">
    <property type="term" value="F:four-way junction helicase activity"/>
    <property type="evidence" value="ECO:0000318"/>
    <property type="project" value="GO_Central"/>
</dbReference>
<dbReference type="GO" id="GO:0045003">
    <property type="term" value="P:double-strand break repair via synthesis-dependent strand annealing"/>
    <property type="evidence" value="ECO:0000318"/>
    <property type="project" value="GO_Central"/>
</dbReference>
<dbReference type="GO" id="GO:0036297">
    <property type="term" value="P:interstrand cross-link repair"/>
    <property type="evidence" value="ECO:0000318"/>
    <property type="project" value="GO_Central"/>
</dbReference>
<dbReference type="CDD" id="cd18033">
    <property type="entry name" value="DEXDc_FANCM"/>
    <property type="match status" value="1"/>
</dbReference>
<dbReference type="CDD" id="cd12091">
    <property type="entry name" value="FANCM_ID"/>
    <property type="match status" value="1"/>
</dbReference>
<dbReference type="CDD" id="cd18801">
    <property type="entry name" value="SF2_C_FANCM_Hef"/>
    <property type="match status" value="1"/>
</dbReference>
<dbReference type="FunFam" id="3.40.50.300:FF:000861">
    <property type="entry name" value="Fanconi anemia, complementation group M"/>
    <property type="match status" value="1"/>
</dbReference>
<dbReference type="Gene3D" id="1.20.1320.20">
    <property type="entry name" value="hef helicase domain"/>
    <property type="match status" value="1"/>
</dbReference>
<dbReference type="Gene3D" id="3.40.50.300">
    <property type="entry name" value="P-loop containing nucleotide triphosphate hydrolases"/>
    <property type="match status" value="2"/>
</dbReference>
<dbReference type="InterPro" id="IPR002464">
    <property type="entry name" value="DNA/RNA_helicase_DEAH_CS"/>
</dbReference>
<dbReference type="InterPro" id="IPR039686">
    <property type="entry name" value="FANCM/Mph1-like_ID"/>
</dbReference>
<dbReference type="InterPro" id="IPR044749">
    <property type="entry name" value="FANCM_DEXDc"/>
</dbReference>
<dbReference type="InterPro" id="IPR006935">
    <property type="entry name" value="Helicase/UvrB_N"/>
</dbReference>
<dbReference type="InterPro" id="IPR014001">
    <property type="entry name" value="Helicase_ATP-bd"/>
</dbReference>
<dbReference type="InterPro" id="IPR001650">
    <property type="entry name" value="Helicase_C-like"/>
</dbReference>
<dbReference type="InterPro" id="IPR027417">
    <property type="entry name" value="P-loop_NTPase"/>
</dbReference>
<dbReference type="PANTHER" id="PTHR14025">
    <property type="entry name" value="FANCONI ANEMIA GROUP M FANCM FAMILY MEMBER"/>
    <property type="match status" value="1"/>
</dbReference>
<dbReference type="PANTHER" id="PTHR14025:SF20">
    <property type="entry name" value="FANCONI ANEMIA GROUP M PROTEIN"/>
    <property type="match status" value="1"/>
</dbReference>
<dbReference type="Pfam" id="PF00271">
    <property type="entry name" value="Helicase_C"/>
    <property type="match status" value="1"/>
</dbReference>
<dbReference type="Pfam" id="PF04851">
    <property type="entry name" value="ResIII"/>
    <property type="match status" value="1"/>
</dbReference>
<dbReference type="SMART" id="SM00487">
    <property type="entry name" value="DEXDc"/>
    <property type="match status" value="1"/>
</dbReference>
<dbReference type="SMART" id="SM00490">
    <property type="entry name" value="HELICc"/>
    <property type="match status" value="1"/>
</dbReference>
<dbReference type="SUPFAM" id="SSF52540">
    <property type="entry name" value="P-loop containing nucleoside triphosphate hydrolases"/>
    <property type="match status" value="1"/>
</dbReference>
<dbReference type="PROSITE" id="PS00690">
    <property type="entry name" value="DEAH_ATP_HELICASE"/>
    <property type="match status" value="1"/>
</dbReference>
<dbReference type="PROSITE" id="PS51192">
    <property type="entry name" value="HELICASE_ATP_BIND_1"/>
    <property type="match status" value="1"/>
</dbReference>
<dbReference type="PROSITE" id="PS51194">
    <property type="entry name" value="HELICASE_CTER"/>
    <property type="match status" value="1"/>
</dbReference>
<evidence type="ECO:0000250" key="1">
    <source>
        <dbReference type="UniProtKB" id="P40562"/>
    </source>
</evidence>
<evidence type="ECO:0000250" key="2">
    <source>
        <dbReference type="UniProtKB" id="Q9UT23"/>
    </source>
</evidence>
<evidence type="ECO:0000255" key="3">
    <source>
        <dbReference type="PROSITE-ProRule" id="PRU00541"/>
    </source>
</evidence>
<evidence type="ECO:0000255" key="4">
    <source>
        <dbReference type="PROSITE-ProRule" id="PRU00542"/>
    </source>
</evidence>
<evidence type="ECO:0000256" key="5">
    <source>
        <dbReference type="SAM" id="MobiDB-lite"/>
    </source>
</evidence>
<evidence type="ECO:0000305" key="6"/>
<gene>
    <name evidence="1" type="primary">mph1</name>
    <name type="ORF">SS1G_04065</name>
</gene>
<organism>
    <name type="scientific">Sclerotinia sclerotiorum (strain ATCC 18683 / 1980 / Ss-1)</name>
    <name type="common">White mold</name>
    <name type="synonym">Whetzelinia sclerotiorum</name>
    <dbReference type="NCBI Taxonomy" id="665079"/>
    <lineage>
        <taxon>Eukaryota</taxon>
        <taxon>Fungi</taxon>
        <taxon>Dikarya</taxon>
        <taxon>Ascomycota</taxon>
        <taxon>Pezizomycotina</taxon>
        <taxon>Leotiomycetes</taxon>
        <taxon>Helotiales</taxon>
        <taxon>Sclerotiniaceae</taxon>
        <taxon>Sclerotinia</taxon>
    </lineage>
</organism>
<protein>
    <recommendedName>
        <fullName evidence="1">ATP-dependent DNA helicase mph1</fullName>
        <ecNumber evidence="1 2">3.6.4.12</ecNumber>
    </recommendedName>
    <alternativeName>
        <fullName evidence="2">FANCM-like protein 1</fullName>
    </alternativeName>
</protein>
<reference key="1">
    <citation type="journal article" date="2011" name="PLoS Genet.">
        <title>Genomic analysis of the necrotrophic fungal pathogens Sclerotinia sclerotiorum and Botrytis cinerea.</title>
        <authorList>
            <person name="Amselem J."/>
            <person name="Cuomo C.A."/>
            <person name="van Kan J.A.L."/>
            <person name="Viaud M."/>
            <person name="Benito E.P."/>
            <person name="Couloux A."/>
            <person name="Coutinho P.M."/>
            <person name="de Vries R.P."/>
            <person name="Dyer P.S."/>
            <person name="Fillinger S."/>
            <person name="Fournier E."/>
            <person name="Gout L."/>
            <person name="Hahn M."/>
            <person name="Kohn L."/>
            <person name="Lapalu N."/>
            <person name="Plummer K.M."/>
            <person name="Pradier J.-M."/>
            <person name="Quevillon E."/>
            <person name="Sharon A."/>
            <person name="Simon A."/>
            <person name="ten Have A."/>
            <person name="Tudzynski B."/>
            <person name="Tudzynski P."/>
            <person name="Wincker P."/>
            <person name="Andrew M."/>
            <person name="Anthouard V."/>
            <person name="Beever R.E."/>
            <person name="Beffa R."/>
            <person name="Benoit I."/>
            <person name="Bouzid O."/>
            <person name="Brault B."/>
            <person name="Chen Z."/>
            <person name="Choquer M."/>
            <person name="Collemare J."/>
            <person name="Cotton P."/>
            <person name="Danchin E.G."/>
            <person name="Da Silva C."/>
            <person name="Gautier A."/>
            <person name="Giraud C."/>
            <person name="Giraud T."/>
            <person name="Gonzalez C."/>
            <person name="Grossetete S."/>
            <person name="Gueldener U."/>
            <person name="Henrissat B."/>
            <person name="Howlett B.J."/>
            <person name="Kodira C."/>
            <person name="Kretschmer M."/>
            <person name="Lappartient A."/>
            <person name="Leroch M."/>
            <person name="Levis C."/>
            <person name="Mauceli E."/>
            <person name="Neuveglise C."/>
            <person name="Oeser B."/>
            <person name="Pearson M."/>
            <person name="Poulain J."/>
            <person name="Poussereau N."/>
            <person name="Quesneville H."/>
            <person name="Rascle C."/>
            <person name="Schumacher J."/>
            <person name="Segurens B."/>
            <person name="Sexton A."/>
            <person name="Silva E."/>
            <person name="Sirven C."/>
            <person name="Soanes D.M."/>
            <person name="Talbot N.J."/>
            <person name="Templeton M."/>
            <person name="Yandava C."/>
            <person name="Yarden O."/>
            <person name="Zeng Q."/>
            <person name="Rollins J.A."/>
            <person name="Lebrun M.-H."/>
            <person name="Dickman M."/>
        </authorList>
    </citation>
    <scope>NUCLEOTIDE SEQUENCE [LARGE SCALE GENOMIC DNA]</scope>
    <source>
        <strain>ATCC 18683 / 1980 / Ss-1</strain>
    </source>
</reference>
<name>MPH1_SCLS1</name>
<proteinExistence type="inferred from homology"/>
<feature type="chain" id="PRO_0000333380" description="ATP-dependent DNA helicase mph1">
    <location>
        <begin position="1"/>
        <end position="1235"/>
    </location>
</feature>
<feature type="domain" description="Helicase ATP-binding" evidence="3">
    <location>
        <begin position="272"/>
        <end position="440"/>
    </location>
</feature>
<feature type="domain" description="Helicase C-terminal" evidence="4">
    <location>
        <begin position="608"/>
        <end position="784"/>
    </location>
</feature>
<feature type="region of interest" description="Disordered" evidence="5">
    <location>
        <begin position="20"/>
        <end position="78"/>
    </location>
</feature>
<feature type="region of interest" description="Disordered" evidence="5">
    <location>
        <begin position="96"/>
        <end position="148"/>
    </location>
</feature>
<feature type="region of interest" description="Disordered" evidence="5">
    <location>
        <begin position="808"/>
        <end position="827"/>
    </location>
</feature>
<feature type="region of interest" description="Disordered" evidence="5">
    <location>
        <begin position="944"/>
        <end position="1117"/>
    </location>
</feature>
<feature type="region of interest" description="Disordered" evidence="5">
    <location>
        <begin position="1144"/>
        <end position="1235"/>
    </location>
</feature>
<feature type="short sequence motif" description="DEAH box" evidence="3">
    <location>
        <begin position="388"/>
        <end position="391"/>
    </location>
</feature>
<feature type="compositionally biased region" description="Basic and acidic residues" evidence="5">
    <location>
        <begin position="61"/>
        <end position="72"/>
    </location>
</feature>
<feature type="compositionally biased region" description="Polar residues" evidence="5">
    <location>
        <begin position="137"/>
        <end position="148"/>
    </location>
</feature>
<feature type="compositionally biased region" description="Basic and acidic residues" evidence="5">
    <location>
        <begin position="947"/>
        <end position="958"/>
    </location>
</feature>
<feature type="compositionally biased region" description="Basic residues" evidence="5">
    <location>
        <begin position="1015"/>
        <end position="1027"/>
    </location>
</feature>
<feature type="compositionally biased region" description="Basic and acidic residues" evidence="5">
    <location>
        <begin position="1065"/>
        <end position="1074"/>
    </location>
</feature>
<feature type="compositionally biased region" description="Acidic residues" evidence="5">
    <location>
        <begin position="1075"/>
        <end position="1085"/>
    </location>
</feature>
<feature type="compositionally biased region" description="Polar residues" evidence="5">
    <location>
        <begin position="1095"/>
        <end position="1114"/>
    </location>
</feature>
<feature type="compositionally biased region" description="Polar residues" evidence="5">
    <location>
        <begin position="1146"/>
        <end position="1159"/>
    </location>
</feature>
<feature type="compositionally biased region" description="Low complexity" evidence="5">
    <location>
        <begin position="1160"/>
        <end position="1170"/>
    </location>
</feature>
<feature type="compositionally biased region" description="Polar residues" evidence="5">
    <location>
        <begin position="1194"/>
        <end position="1209"/>
    </location>
</feature>
<feature type="binding site" evidence="3">
    <location>
        <begin position="285"/>
        <end position="292"/>
    </location>
    <ligand>
        <name>ATP</name>
        <dbReference type="ChEBI" id="CHEBI:30616"/>
    </ligand>
</feature>
<accession>A7EFH4</accession>
<keyword id="KW-0067">ATP-binding</keyword>
<keyword id="KW-0227">DNA damage</keyword>
<keyword id="KW-0234">DNA repair</keyword>
<keyword id="KW-0238">DNA-binding</keyword>
<keyword id="KW-0347">Helicase</keyword>
<keyword id="KW-0378">Hydrolase</keyword>
<keyword id="KW-0547">Nucleotide-binding</keyword>
<keyword id="KW-0539">Nucleus</keyword>
<keyword id="KW-1185">Reference proteome</keyword>
<comment type="function">
    <text evidence="2">ATP-dependent DNA helicase involved in DNA damage repair by homologous recombination and in genome maintenance. Capable of unwinding D-loops. Plays a role in limiting crossover recombinants during mitotic DNA double-strand break (DSB) repair. Component of a FANCM-MHF complex which promotes gene conversion at blocked replication forks, probably by reversal of the stalled fork.</text>
</comment>
<comment type="catalytic activity">
    <reaction evidence="2">
        <text>ATP + H2O = ADP + phosphate + H(+)</text>
        <dbReference type="Rhea" id="RHEA:13065"/>
        <dbReference type="ChEBI" id="CHEBI:15377"/>
        <dbReference type="ChEBI" id="CHEBI:15378"/>
        <dbReference type="ChEBI" id="CHEBI:30616"/>
        <dbReference type="ChEBI" id="CHEBI:43474"/>
        <dbReference type="ChEBI" id="CHEBI:456216"/>
        <dbReference type="EC" id="3.6.4.12"/>
    </reaction>
</comment>
<comment type="subunit">
    <text evidence="2">Interacts with the MHF histone-fold complex to form the FANCM-MHF complex.</text>
</comment>
<comment type="subcellular location">
    <subcellularLocation>
        <location evidence="1">Nucleus</location>
    </subcellularLocation>
</comment>
<comment type="similarity">
    <text evidence="6">Belongs to the DEAD box helicase family. DEAH subfamily. FANCM sub-subfamily.</text>
</comment>
<sequence>MSDDEYGDIDAAVWDEAEALTQASQTLPSNFPHRRKRRRIGSEELDDGFLSGRRRGSHGFSRSDNDEADEKKSKYRIHLGAEEVPAAVIMGATQADEMPDSSPYRIRGPIYKRPRRSPPMELEQKSSPAQPSMVESAKTQKQNIVHSPQPTAQYDFSRELEDLPSDAFSPSPPQLRMSSIPITISSSPPLESTQSVRSQRLAAPQNGLRQTTLFGGRAPNQVPSSTQAKKVHKYLVDKVPEPPTHHTLDEEAIKTWIYPNNLGAERRYQYTIVHKGLFNNLLVALPTGLGKTFIAATIMLNFFRWTTDSQIVFMAPTKPLVSQQVKACFEIAGIPRSSTTMLTGDQSPALRAEEWAEKRVFFMTPQTVENDLKTGIADPKKIALIVVDEAHRATGNYAYTKVVQFLRRFNESFRVLALTATPGSSVEAVQEVIDNLEIAEVEIRTEDSIDIKEYVHRRDITEILIDPSDEIIMIRELFSKALQPLVNLLCSQKAYYNKDPMGLTQYGMLTARKAWMASGAGKSAQMSIKGMMNALFTVLTSMGHAIKLLNFHGIGPFFSNIKDFRAEVEGNKKGGKYKNQIVNSPEFKKMMERIQGWINKEDFIGHPKLTYLCDTVLNHFLDAGAGLMGDNMPPSSTRVIVFTEYRDSAEDIARVLNKHGPMIRASVFVGQSDSKRSEGMNQEKQLETIRKFKAGGINVIVATSIGEEGLDIGEVDLIVCYDSSSSPIRMLQRMGRTGRKRAGKIVLLLMRGKEEDSYKKSKDNYEQIQRMISSGSRFTFRHDLSARIIPRKVKPEVDKRFIEIPLENTQDPSLPEPKRRAKPRKKLAKKFHMPDGVETGFRKASKLNSNAESPLTKFGIKRKPSELNDDELAPVPLLDSVLLNAKDEAEHSRRFLKVPDGALEEVGMPDLTAQPITQRTLTRTAKVSHGKYTRSCVSLFNKLSRLQRPEDRDNKPYGDEPPSDFGSIPTMPLEAEVRARAPKAPKASDPAQVVKASRVAKTTSALKKAPASKRVAPKKAKPRRGRALRNDNSDSEDSTASMAMVSNLRSSQIPQPTPDSDEEGPGERVDRTSDMEELEADDDSDLGSLVDFIDPTQTQTQIPLTGTSNFSSSPPLMETWEDERINGNAVGGRRGMLPRAVEMTGAKNSSFKNGTMTQESSDGGDSMDSDFPTIEDLVRSDTTTTTTRKIADPPSSSVFSSGQKATPNMFTRKRDGDVRGRGLKRRVVESDDSDE</sequence>